<feature type="chain" id="PRO_0000263883" description="Translation initiation factor IF-1">
    <location>
        <begin position="1"/>
        <end position="72"/>
    </location>
</feature>
<feature type="domain" description="S1-like" evidence="1">
    <location>
        <begin position="1"/>
        <end position="72"/>
    </location>
</feature>
<dbReference type="EMBL" id="CP000259">
    <property type="protein sequence ID" value="ABF31254.1"/>
    <property type="status" value="ALT_INIT"/>
    <property type="molecule type" value="Genomic_DNA"/>
</dbReference>
<dbReference type="RefSeq" id="WP_001040189.1">
    <property type="nucleotide sequence ID" value="NC_008021.1"/>
</dbReference>
<dbReference type="SMR" id="Q1JNZ5"/>
<dbReference type="GeneID" id="98392414"/>
<dbReference type="KEGG" id="spk:MGAS9429_Spy0066"/>
<dbReference type="HOGENOM" id="CLU_151267_1_0_9"/>
<dbReference type="Proteomes" id="UP000002433">
    <property type="component" value="Chromosome"/>
</dbReference>
<dbReference type="GO" id="GO:0005829">
    <property type="term" value="C:cytosol"/>
    <property type="evidence" value="ECO:0007669"/>
    <property type="project" value="TreeGrafter"/>
</dbReference>
<dbReference type="GO" id="GO:0043022">
    <property type="term" value="F:ribosome binding"/>
    <property type="evidence" value="ECO:0007669"/>
    <property type="project" value="UniProtKB-UniRule"/>
</dbReference>
<dbReference type="GO" id="GO:0019843">
    <property type="term" value="F:rRNA binding"/>
    <property type="evidence" value="ECO:0007669"/>
    <property type="project" value="UniProtKB-UniRule"/>
</dbReference>
<dbReference type="GO" id="GO:0003743">
    <property type="term" value="F:translation initiation factor activity"/>
    <property type="evidence" value="ECO:0007669"/>
    <property type="project" value="UniProtKB-UniRule"/>
</dbReference>
<dbReference type="CDD" id="cd04451">
    <property type="entry name" value="S1_IF1"/>
    <property type="match status" value="1"/>
</dbReference>
<dbReference type="FunFam" id="2.40.50.140:FF:000002">
    <property type="entry name" value="Translation initiation factor IF-1"/>
    <property type="match status" value="1"/>
</dbReference>
<dbReference type="Gene3D" id="2.40.50.140">
    <property type="entry name" value="Nucleic acid-binding proteins"/>
    <property type="match status" value="1"/>
</dbReference>
<dbReference type="HAMAP" id="MF_00075">
    <property type="entry name" value="IF_1"/>
    <property type="match status" value="1"/>
</dbReference>
<dbReference type="InterPro" id="IPR012340">
    <property type="entry name" value="NA-bd_OB-fold"/>
</dbReference>
<dbReference type="InterPro" id="IPR006196">
    <property type="entry name" value="RNA-binding_domain_S1_IF1"/>
</dbReference>
<dbReference type="InterPro" id="IPR003029">
    <property type="entry name" value="S1_domain"/>
</dbReference>
<dbReference type="InterPro" id="IPR004368">
    <property type="entry name" value="TIF_IF1"/>
</dbReference>
<dbReference type="NCBIfam" id="TIGR00008">
    <property type="entry name" value="infA"/>
    <property type="match status" value="1"/>
</dbReference>
<dbReference type="PANTHER" id="PTHR33370">
    <property type="entry name" value="TRANSLATION INITIATION FACTOR IF-1, CHLOROPLASTIC"/>
    <property type="match status" value="1"/>
</dbReference>
<dbReference type="PANTHER" id="PTHR33370:SF1">
    <property type="entry name" value="TRANSLATION INITIATION FACTOR IF-1, CHLOROPLASTIC"/>
    <property type="match status" value="1"/>
</dbReference>
<dbReference type="Pfam" id="PF01176">
    <property type="entry name" value="eIF-1a"/>
    <property type="match status" value="1"/>
</dbReference>
<dbReference type="SMART" id="SM00316">
    <property type="entry name" value="S1"/>
    <property type="match status" value="1"/>
</dbReference>
<dbReference type="SUPFAM" id="SSF50249">
    <property type="entry name" value="Nucleic acid-binding proteins"/>
    <property type="match status" value="1"/>
</dbReference>
<dbReference type="PROSITE" id="PS50832">
    <property type="entry name" value="S1_IF1_TYPE"/>
    <property type="match status" value="1"/>
</dbReference>
<sequence length="72" mass="8273">MAKEDVIEIEGKVVETMPNAMFTVELENGHQILATVSGKIRKNYIRILVGDRVTVEMSPYDLTRGRITYRFK</sequence>
<proteinExistence type="inferred from homology"/>
<reference key="1">
    <citation type="journal article" date="2006" name="Proc. Natl. Acad. Sci. U.S.A.">
        <title>Molecular genetic anatomy of inter- and intraserotype variation in the human bacterial pathogen group A Streptococcus.</title>
        <authorList>
            <person name="Beres S.B."/>
            <person name="Richter E.W."/>
            <person name="Nagiec M.J."/>
            <person name="Sumby P."/>
            <person name="Porcella S.F."/>
            <person name="DeLeo F.R."/>
            <person name="Musser J.M."/>
        </authorList>
    </citation>
    <scope>NUCLEOTIDE SEQUENCE [LARGE SCALE GENOMIC DNA]</scope>
    <source>
        <strain>MGAS9429</strain>
    </source>
</reference>
<name>IF1_STRPC</name>
<evidence type="ECO:0000255" key="1">
    <source>
        <dbReference type="HAMAP-Rule" id="MF_00075"/>
    </source>
</evidence>
<evidence type="ECO:0000305" key="2"/>
<comment type="function">
    <text evidence="1">One of the essential components for the initiation of protein synthesis. Stabilizes the binding of IF-2 and IF-3 on the 30S subunit to which N-formylmethionyl-tRNA(fMet) subsequently binds. Helps modulate mRNA selection, yielding the 30S pre-initiation complex (PIC). Upon addition of the 50S ribosomal subunit IF-1, IF-2 and IF-3 are released leaving the mature 70S translation initiation complex.</text>
</comment>
<comment type="subunit">
    <text evidence="1">Component of the 30S ribosomal translation pre-initiation complex which assembles on the 30S ribosome in the order IF-2 and IF-3, IF-1 and N-formylmethionyl-tRNA(fMet); mRNA recruitment can occur at any time during PIC assembly.</text>
</comment>
<comment type="subcellular location">
    <subcellularLocation>
        <location evidence="1">Cytoplasm</location>
    </subcellularLocation>
</comment>
<comment type="similarity">
    <text evidence="1">Belongs to the IF-1 family.</text>
</comment>
<comment type="sequence caution" evidence="2">
    <conflict type="erroneous initiation">
        <sequence resource="EMBL-CDS" id="ABF31254"/>
    </conflict>
    <text>Extended N-terminus.</text>
</comment>
<accession>Q1JNZ5</accession>
<protein>
    <recommendedName>
        <fullName evidence="1">Translation initiation factor IF-1</fullName>
    </recommendedName>
</protein>
<keyword id="KW-0963">Cytoplasm</keyword>
<keyword id="KW-0396">Initiation factor</keyword>
<keyword id="KW-0648">Protein biosynthesis</keyword>
<keyword id="KW-0694">RNA-binding</keyword>
<keyword id="KW-0699">rRNA-binding</keyword>
<gene>
    <name evidence="1" type="primary">infA</name>
    <name type="ordered locus">MGAS9429_Spy0066</name>
</gene>
<organism>
    <name type="scientific">Streptococcus pyogenes serotype M12 (strain MGAS9429)</name>
    <dbReference type="NCBI Taxonomy" id="370551"/>
    <lineage>
        <taxon>Bacteria</taxon>
        <taxon>Bacillati</taxon>
        <taxon>Bacillota</taxon>
        <taxon>Bacilli</taxon>
        <taxon>Lactobacillales</taxon>
        <taxon>Streptococcaceae</taxon>
        <taxon>Streptococcus</taxon>
    </lineage>
</organism>